<feature type="chain" id="PRO_0000175463" description="DNA-directed RNA polymerase subunit alpha">
    <location>
        <begin position="1"/>
        <end position="339"/>
    </location>
</feature>
<feature type="region of interest" description="Alpha N-terminal domain (alpha-NTD)" evidence="1">
    <location>
        <begin position="1"/>
        <end position="233"/>
    </location>
</feature>
<feature type="region of interest" description="Alpha C-terminal domain (alpha-CTD)" evidence="1">
    <location>
        <begin position="266"/>
        <end position="339"/>
    </location>
</feature>
<organism>
    <name type="scientific">Hordeum marinum</name>
    <name type="common">Seaside barley</name>
    <dbReference type="NCBI Taxonomy" id="4519"/>
    <lineage>
        <taxon>Eukaryota</taxon>
        <taxon>Viridiplantae</taxon>
        <taxon>Streptophyta</taxon>
        <taxon>Embryophyta</taxon>
        <taxon>Tracheophyta</taxon>
        <taxon>Spermatophyta</taxon>
        <taxon>Magnoliopsida</taxon>
        <taxon>Liliopsida</taxon>
        <taxon>Poales</taxon>
        <taxon>Poaceae</taxon>
        <taxon>BOP clade</taxon>
        <taxon>Pooideae</taxon>
        <taxon>Triticodae</taxon>
        <taxon>Triticeae</taxon>
        <taxon>Hordeinae</taxon>
        <taxon>Hordeum</taxon>
    </lineage>
</organism>
<evidence type="ECO:0000255" key="1">
    <source>
        <dbReference type="HAMAP-Rule" id="MF_00059"/>
    </source>
</evidence>
<accession>Q7H6J0</accession>
<name>RPOA_HORMA</name>
<gene>
    <name evidence="1" type="primary">rpoA</name>
</gene>
<keyword id="KW-0150">Chloroplast</keyword>
<keyword id="KW-0240">DNA-directed RNA polymerase</keyword>
<keyword id="KW-0548">Nucleotidyltransferase</keyword>
<keyword id="KW-0934">Plastid</keyword>
<keyword id="KW-0804">Transcription</keyword>
<keyword id="KW-0808">Transferase</keyword>
<proteinExistence type="inferred from homology"/>
<geneLocation type="chloroplast"/>
<comment type="function">
    <text evidence="1">DNA-dependent RNA polymerase catalyzes the transcription of DNA into RNA using the four ribonucleoside triphosphates as substrates.</text>
</comment>
<comment type="catalytic activity">
    <reaction evidence="1">
        <text>RNA(n) + a ribonucleoside 5'-triphosphate = RNA(n+1) + diphosphate</text>
        <dbReference type="Rhea" id="RHEA:21248"/>
        <dbReference type="Rhea" id="RHEA-COMP:14527"/>
        <dbReference type="Rhea" id="RHEA-COMP:17342"/>
        <dbReference type="ChEBI" id="CHEBI:33019"/>
        <dbReference type="ChEBI" id="CHEBI:61557"/>
        <dbReference type="ChEBI" id="CHEBI:140395"/>
        <dbReference type="EC" id="2.7.7.6"/>
    </reaction>
</comment>
<comment type="subunit">
    <text evidence="1">In plastids the minimal PEP RNA polymerase catalytic core is composed of four subunits: alpha, beta, beta', and beta''. When a (nuclear-encoded) sigma factor is associated with the core the holoenzyme is formed, which can initiate transcription.</text>
</comment>
<comment type="subcellular location">
    <subcellularLocation>
        <location>Plastid</location>
        <location>Chloroplast</location>
    </subcellularLocation>
</comment>
<comment type="domain">
    <text evidence="1">The N-terminal domain is essential for RNAP assembly and basal transcription, whereas the C-terminal domain is involved in interaction with transcriptional regulators and with upstream promoter elements.</text>
</comment>
<comment type="similarity">
    <text evidence="1">Belongs to the RNA polymerase alpha chain family.</text>
</comment>
<sequence>MVREEVAGSTQTLQWKCVESRVDSKRLYYGRFILSPLRKGQADTVGIALRRALLGEIEGTCITRAKFGSVPHEYSTIAGIEESVQEILLNLKEIVLRSNLYGVRDASICVKGPRYITAQDIILPPSVETVDTAQPIANLTEPIDFCIDLQIKRDRGYQTELRKNYQDGSYPIDAVSMPVRNVNYSIFSCGNGNEKHEILFLEIWTNGSLTPKEALYEASRNLIDLFLPFLHAEEEGTSFEENKNRFTPPLFTFQKRLTNLKKNKKGIPLNCIFIDQLELTSRTYNCLKRANIHTLLDLLSKTEEDLMRIDSFRMEDRKHIWDTLEKHLPIDLLKNKLSF</sequence>
<dbReference type="EC" id="2.7.7.6" evidence="1"/>
<dbReference type="EMBL" id="AY115921">
    <property type="protein sequence ID" value="AAM97430.1"/>
    <property type="molecule type" value="Genomic_DNA"/>
</dbReference>
<dbReference type="SMR" id="Q7H6J0"/>
<dbReference type="GO" id="GO:0009507">
    <property type="term" value="C:chloroplast"/>
    <property type="evidence" value="ECO:0007669"/>
    <property type="project" value="UniProtKB-SubCell"/>
</dbReference>
<dbReference type="GO" id="GO:0000428">
    <property type="term" value="C:DNA-directed RNA polymerase complex"/>
    <property type="evidence" value="ECO:0007669"/>
    <property type="project" value="UniProtKB-KW"/>
</dbReference>
<dbReference type="GO" id="GO:0005739">
    <property type="term" value="C:mitochondrion"/>
    <property type="evidence" value="ECO:0007669"/>
    <property type="project" value="GOC"/>
</dbReference>
<dbReference type="GO" id="GO:0003677">
    <property type="term" value="F:DNA binding"/>
    <property type="evidence" value="ECO:0007669"/>
    <property type="project" value="UniProtKB-UniRule"/>
</dbReference>
<dbReference type="GO" id="GO:0003899">
    <property type="term" value="F:DNA-directed RNA polymerase activity"/>
    <property type="evidence" value="ECO:0007669"/>
    <property type="project" value="UniProtKB-UniRule"/>
</dbReference>
<dbReference type="GO" id="GO:0046983">
    <property type="term" value="F:protein dimerization activity"/>
    <property type="evidence" value="ECO:0007669"/>
    <property type="project" value="InterPro"/>
</dbReference>
<dbReference type="GO" id="GO:0006351">
    <property type="term" value="P:DNA-templated transcription"/>
    <property type="evidence" value="ECO:0007669"/>
    <property type="project" value="UniProtKB-UniRule"/>
</dbReference>
<dbReference type="CDD" id="cd06928">
    <property type="entry name" value="RNAP_alpha_NTD"/>
    <property type="match status" value="1"/>
</dbReference>
<dbReference type="FunFam" id="1.10.150.20:FF:000021">
    <property type="entry name" value="DNA-directed RNA polymerase subunit alpha"/>
    <property type="match status" value="1"/>
</dbReference>
<dbReference type="FunFam" id="2.170.120.12:FF:000001">
    <property type="entry name" value="DNA-directed RNA polymerase subunit alpha"/>
    <property type="match status" value="1"/>
</dbReference>
<dbReference type="Gene3D" id="1.10.150.20">
    <property type="entry name" value="5' to 3' exonuclease, C-terminal subdomain"/>
    <property type="match status" value="1"/>
</dbReference>
<dbReference type="Gene3D" id="2.170.120.12">
    <property type="entry name" value="DNA-directed RNA polymerase, insert domain"/>
    <property type="match status" value="1"/>
</dbReference>
<dbReference type="Gene3D" id="3.30.1360.10">
    <property type="entry name" value="RNA polymerase, RBP11-like subunit"/>
    <property type="match status" value="1"/>
</dbReference>
<dbReference type="HAMAP" id="MF_00059">
    <property type="entry name" value="RNApol_bact_RpoA"/>
    <property type="match status" value="1"/>
</dbReference>
<dbReference type="InterPro" id="IPR011262">
    <property type="entry name" value="DNA-dir_RNA_pol_insert"/>
</dbReference>
<dbReference type="InterPro" id="IPR011263">
    <property type="entry name" value="DNA-dir_RNA_pol_RpoA/D/Rpb3"/>
</dbReference>
<dbReference type="InterPro" id="IPR011773">
    <property type="entry name" value="DNA-dir_RpoA"/>
</dbReference>
<dbReference type="InterPro" id="IPR036603">
    <property type="entry name" value="RBP11-like"/>
</dbReference>
<dbReference type="InterPro" id="IPR011260">
    <property type="entry name" value="RNAP_asu_C"/>
</dbReference>
<dbReference type="InterPro" id="IPR036643">
    <property type="entry name" value="RNApol_insert_sf"/>
</dbReference>
<dbReference type="NCBIfam" id="TIGR02027">
    <property type="entry name" value="rpoA"/>
    <property type="match status" value="1"/>
</dbReference>
<dbReference type="Pfam" id="PF01000">
    <property type="entry name" value="RNA_pol_A_bac"/>
    <property type="match status" value="1"/>
</dbReference>
<dbReference type="Pfam" id="PF03118">
    <property type="entry name" value="RNA_pol_A_CTD"/>
    <property type="match status" value="1"/>
</dbReference>
<dbReference type="Pfam" id="PF01193">
    <property type="entry name" value="RNA_pol_L"/>
    <property type="match status" value="1"/>
</dbReference>
<dbReference type="SMART" id="SM00662">
    <property type="entry name" value="RPOLD"/>
    <property type="match status" value="1"/>
</dbReference>
<dbReference type="SUPFAM" id="SSF47789">
    <property type="entry name" value="C-terminal domain of RNA polymerase alpha subunit"/>
    <property type="match status" value="1"/>
</dbReference>
<dbReference type="SUPFAM" id="SSF56553">
    <property type="entry name" value="Insert subdomain of RNA polymerase alpha subunit"/>
    <property type="match status" value="1"/>
</dbReference>
<dbReference type="SUPFAM" id="SSF55257">
    <property type="entry name" value="RBP11-like subunits of RNA polymerase"/>
    <property type="match status" value="1"/>
</dbReference>
<reference key="1">
    <citation type="journal article" date="2002" name="Genome">
        <title>Phylogenetic analysis of North American Elymus and the monogenomic Triticeae (Poaceae) using three chloroplast DNA data sets.</title>
        <authorList>
            <person name="Mason-Gamer R.J."/>
            <person name="Orme N.L."/>
            <person name="Anderson C.M."/>
        </authorList>
    </citation>
    <scope>NUCLEOTIDE SEQUENCE [GENOMIC DNA]</scope>
</reference>
<protein>
    <recommendedName>
        <fullName evidence="1">DNA-directed RNA polymerase subunit alpha</fullName>
        <shortName evidence="1">PEP</shortName>
        <ecNumber evidence="1">2.7.7.6</ecNumber>
    </recommendedName>
    <alternativeName>
        <fullName evidence="1">Plastid-encoded RNA polymerase subunit alpha</fullName>
        <shortName evidence="1">RNA polymerase subunit alpha</shortName>
    </alternativeName>
</protein>